<dbReference type="EC" id="2.7.11.1"/>
<dbReference type="EMBL" id="AB125306">
    <property type="protein sequence ID" value="BAD18001.1"/>
    <property type="molecule type" value="mRNA"/>
</dbReference>
<dbReference type="EMBL" id="JF733763">
    <property type="protein sequence ID" value="AEF00934.1"/>
    <property type="molecule type" value="mRNA"/>
</dbReference>
<dbReference type="EMBL" id="JN848807">
    <property type="protein sequence ID" value="AFK74497.1"/>
    <property type="molecule type" value="mRNA"/>
</dbReference>
<dbReference type="EMBL" id="AL606656">
    <property type="protein sequence ID" value="CAE05772.1"/>
    <property type="molecule type" value="Genomic_DNA"/>
</dbReference>
<dbReference type="EMBL" id="AP008210">
    <property type="protein sequence ID" value="BAF16270.1"/>
    <property type="molecule type" value="Genomic_DNA"/>
</dbReference>
<dbReference type="EMBL" id="AP014960">
    <property type="protein sequence ID" value="BAS91779.1"/>
    <property type="molecule type" value="Genomic_DNA"/>
</dbReference>
<dbReference type="EMBL" id="CM000141">
    <property type="protein sequence ID" value="EAZ32513.1"/>
    <property type="molecule type" value="Genomic_DNA"/>
</dbReference>
<dbReference type="EMBL" id="AK100269">
    <property type="protein sequence ID" value="BAG94526.1"/>
    <property type="molecule type" value="mRNA"/>
</dbReference>
<dbReference type="RefSeq" id="XP_015635635.1">
    <property type="nucleotide sequence ID" value="XM_015780149.1"/>
</dbReference>
<dbReference type="SMR" id="Q7XKA8"/>
<dbReference type="FunCoup" id="Q7XKA8">
    <property type="interactions" value="425"/>
</dbReference>
<dbReference type="STRING" id="39947.Q7XKA8"/>
<dbReference type="PaxDb" id="39947-Q7XKA8"/>
<dbReference type="EnsemblPlants" id="Os04t0691100-01">
    <property type="protein sequence ID" value="Os04t0691100-01"/>
    <property type="gene ID" value="Os04g0691100"/>
</dbReference>
<dbReference type="Gramene" id="Os04t0691100-01">
    <property type="protein sequence ID" value="Os04t0691100-01"/>
    <property type="gene ID" value="Os04g0691100"/>
</dbReference>
<dbReference type="KEGG" id="dosa:Os04g0691100"/>
<dbReference type="eggNOG" id="KOG0583">
    <property type="taxonomic scope" value="Eukaryota"/>
</dbReference>
<dbReference type="HOGENOM" id="CLU_000288_63_0_1"/>
<dbReference type="InParanoid" id="Q7XKA8"/>
<dbReference type="OMA" id="VEFHPWV"/>
<dbReference type="OrthoDB" id="193931at2759"/>
<dbReference type="Proteomes" id="UP000000763">
    <property type="component" value="Chromosome 4"/>
</dbReference>
<dbReference type="Proteomes" id="UP000007752">
    <property type="component" value="Chromosome 4"/>
</dbReference>
<dbReference type="Proteomes" id="UP000059680">
    <property type="component" value="Chromosome 4"/>
</dbReference>
<dbReference type="GO" id="GO:0005737">
    <property type="term" value="C:cytoplasm"/>
    <property type="evidence" value="ECO:0007669"/>
    <property type="project" value="UniProtKB-SubCell"/>
</dbReference>
<dbReference type="GO" id="GO:0005634">
    <property type="term" value="C:nucleus"/>
    <property type="evidence" value="ECO:0007669"/>
    <property type="project" value="UniProtKB-SubCell"/>
</dbReference>
<dbReference type="GO" id="GO:0005524">
    <property type="term" value="F:ATP binding"/>
    <property type="evidence" value="ECO:0007669"/>
    <property type="project" value="UniProtKB-KW"/>
</dbReference>
<dbReference type="GO" id="GO:0106310">
    <property type="term" value="F:protein serine kinase activity"/>
    <property type="evidence" value="ECO:0007669"/>
    <property type="project" value="RHEA"/>
</dbReference>
<dbReference type="GO" id="GO:0004674">
    <property type="term" value="F:protein serine/threonine kinase activity"/>
    <property type="evidence" value="ECO:0000318"/>
    <property type="project" value="GO_Central"/>
</dbReference>
<dbReference type="GO" id="GO:0009738">
    <property type="term" value="P:abscisic acid-activated signaling pathway"/>
    <property type="evidence" value="ECO:0007669"/>
    <property type="project" value="UniProtKB-KW"/>
</dbReference>
<dbReference type="CDD" id="cd14662">
    <property type="entry name" value="STKc_SnRK2"/>
    <property type="match status" value="1"/>
</dbReference>
<dbReference type="FunFam" id="1.10.510.10:FF:000132">
    <property type="entry name" value="Serine/threonine-protein kinase SRK2A"/>
    <property type="match status" value="1"/>
</dbReference>
<dbReference type="FunFam" id="3.30.200.20:FF:000045">
    <property type="entry name" value="Serine/threonine-protein kinase SRK2E"/>
    <property type="match status" value="1"/>
</dbReference>
<dbReference type="Gene3D" id="3.30.200.20">
    <property type="entry name" value="Phosphorylase Kinase, domain 1"/>
    <property type="match status" value="1"/>
</dbReference>
<dbReference type="Gene3D" id="1.10.510.10">
    <property type="entry name" value="Transferase(Phosphotransferase) domain 1"/>
    <property type="match status" value="1"/>
</dbReference>
<dbReference type="InterPro" id="IPR011009">
    <property type="entry name" value="Kinase-like_dom_sf"/>
</dbReference>
<dbReference type="InterPro" id="IPR000719">
    <property type="entry name" value="Prot_kinase_dom"/>
</dbReference>
<dbReference type="InterPro" id="IPR017441">
    <property type="entry name" value="Protein_kinase_ATP_BS"/>
</dbReference>
<dbReference type="InterPro" id="IPR008271">
    <property type="entry name" value="Ser/Thr_kinase_AS"/>
</dbReference>
<dbReference type="PANTHER" id="PTHR24343">
    <property type="entry name" value="SERINE/THREONINE KINASE"/>
    <property type="match status" value="1"/>
</dbReference>
<dbReference type="PANTHER" id="PTHR24343:SF521">
    <property type="entry name" value="SERINE_THREONINE-PROTEIN KINASE SAPK5"/>
    <property type="match status" value="1"/>
</dbReference>
<dbReference type="Pfam" id="PF00069">
    <property type="entry name" value="Pkinase"/>
    <property type="match status" value="1"/>
</dbReference>
<dbReference type="SMART" id="SM00220">
    <property type="entry name" value="S_TKc"/>
    <property type="match status" value="1"/>
</dbReference>
<dbReference type="SUPFAM" id="SSF56112">
    <property type="entry name" value="Protein kinase-like (PK-like)"/>
    <property type="match status" value="1"/>
</dbReference>
<dbReference type="PROSITE" id="PS00107">
    <property type="entry name" value="PROTEIN_KINASE_ATP"/>
    <property type="match status" value="1"/>
</dbReference>
<dbReference type="PROSITE" id="PS50011">
    <property type="entry name" value="PROTEIN_KINASE_DOM"/>
    <property type="match status" value="1"/>
</dbReference>
<dbReference type="PROSITE" id="PS00108">
    <property type="entry name" value="PROTEIN_KINASE_ST"/>
    <property type="match status" value="1"/>
</dbReference>
<gene>
    <name type="primary">SAPK5</name>
    <name type="synonym">RK3</name>
    <name type="ordered locus">Os04g0691100</name>
    <name type="ordered locus">LOC_Os04g59450</name>
    <name evidence="9" type="ORF">OsJ_16733</name>
    <name type="ORF">OSJNBb0020J19.1</name>
</gene>
<evidence type="ECO:0000250" key="1"/>
<evidence type="ECO:0000255" key="2">
    <source>
        <dbReference type="PROSITE-ProRule" id="PRU00159"/>
    </source>
</evidence>
<evidence type="ECO:0000255" key="3">
    <source>
        <dbReference type="PROSITE-ProRule" id="PRU10027"/>
    </source>
</evidence>
<evidence type="ECO:0000256" key="4">
    <source>
        <dbReference type="SAM" id="MobiDB-lite"/>
    </source>
</evidence>
<evidence type="ECO:0000269" key="5">
    <source>
    </source>
</evidence>
<evidence type="ECO:0000269" key="6">
    <source ref="2"/>
</evidence>
<evidence type="ECO:0000303" key="7">
    <source ref="2"/>
</evidence>
<evidence type="ECO:0000312" key="8">
    <source>
        <dbReference type="EMBL" id="AFK74497.1"/>
    </source>
</evidence>
<evidence type="ECO:0000312" key="9">
    <source>
        <dbReference type="EMBL" id="EAZ32513.1"/>
    </source>
</evidence>
<name>SAPK5_ORYSJ</name>
<reference key="1">
    <citation type="journal article" date="2004" name="Plant Cell">
        <title>Differential activation of the rice sucrose nonfermenting1-related protein kinase2 family by hyperosmotic stress and abscisic acid.</title>
        <authorList>
            <person name="Kobayashi Y."/>
            <person name="Yamamoto S."/>
            <person name="Minami H."/>
            <person name="Kagaya Y."/>
            <person name="Hattori T."/>
        </authorList>
    </citation>
    <scope>NUCLEOTIDE SEQUENCE [MRNA]</scope>
    <scope>TISSUE SPECIFICITY</scope>
    <scope>INDUCTION</scope>
    <scope>NOMENCLATURE</scope>
    <source>
        <strain>cv. Nipponbare</strain>
    </source>
</reference>
<reference key="2">
    <citation type="journal article" date="2013" name="Plant Mol. Biol. Rep.">
        <title>Genome-wide phylogenetic analysis of stress-activated protein kinase genes in rice (OsSAPKs) and expression profiling in response to Xanthomonas oryzae pv. oryzicola infection.</title>
        <authorList>
            <person name="Xu M.-R."/>
            <person name="Huang L.-Y."/>
            <person name="Zhang F."/>
            <person name="Zhu L.-H."/>
            <person name="Zhou Y.-L."/>
            <person name="Li Z.-K."/>
        </authorList>
    </citation>
    <scope>NUCLEOTIDE SEQUENCE [MRNA]</scope>
    <scope>INDUCTION BY XANTHOMONAS ORYZAE</scope>
    <scope>SUBCELLULAR LOCATION</scope>
</reference>
<reference key="3">
    <citation type="submission" date="2011-10" db="EMBL/GenBank/DDBJ databases">
        <title>OSRK3 mRNA.</title>
        <authorList>
            <person name="Yoon I.S."/>
        </authorList>
    </citation>
    <scope>NUCLEOTIDE SEQUENCE [MRNA]</scope>
</reference>
<reference key="4">
    <citation type="journal article" date="2002" name="Nature">
        <title>Sequence and analysis of rice chromosome 4.</title>
        <authorList>
            <person name="Feng Q."/>
            <person name="Zhang Y."/>
            <person name="Hao P."/>
            <person name="Wang S."/>
            <person name="Fu G."/>
            <person name="Huang Y."/>
            <person name="Li Y."/>
            <person name="Zhu J."/>
            <person name="Liu Y."/>
            <person name="Hu X."/>
            <person name="Jia P."/>
            <person name="Zhang Y."/>
            <person name="Zhao Q."/>
            <person name="Ying K."/>
            <person name="Yu S."/>
            <person name="Tang Y."/>
            <person name="Weng Q."/>
            <person name="Zhang L."/>
            <person name="Lu Y."/>
            <person name="Mu J."/>
            <person name="Lu Y."/>
            <person name="Zhang L.S."/>
            <person name="Yu Z."/>
            <person name="Fan D."/>
            <person name="Liu X."/>
            <person name="Lu T."/>
            <person name="Li C."/>
            <person name="Wu Y."/>
            <person name="Sun T."/>
            <person name="Lei H."/>
            <person name="Li T."/>
            <person name="Hu H."/>
            <person name="Guan J."/>
            <person name="Wu M."/>
            <person name="Zhang R."/>
            <person name="Zhou B."/>
            <person name="Chen Z."/>
            <person name="Chen L."/>
            <person name="Jin Z."/>
            <person name="Wang R."/>
            <person name="Yin H."/>
            <person name="Cai Z."/>
            <person name="Ren S."/>
            <person name="Lv G."/>
            <person name="Gu W."/>
            <person name="Zhu G."/>
            <person name="Tu Y."/>
            <person name="Jia J."/>
            <person name="Zhang Y."/>
            <person name="Chen J."/>
            <person name="Kang H."/>
            <person name="Chen X."/>
            <person name="Shao C."/>
            <person name="Sun Y."/>
            <person name="Hu Q."/>
            <person name="Zhang X."/>
            <person name="Zhang W."/>
            <person name="Wang L."/>
            <person name="Ding C."/>
            <person name="Sheng H."/>
            <person name="Gu J."/>
            <person name="Chen S."/>
            <person name="Ni L."/>
            <person name="Zhu F."/>
            <person name="Chen W."/>
            <person name="Lan L."/>
            <person name="Lai Y."/>
            <person name="Cheng Z."/>
            <person name="Gu M."/>
            <person name="Jiang J."/>
            <person name="Li J."/>
            <person name="Hong G."/>
            <person name="Xue Y."/>
            <person name="Han B."/>
        </authorList>
    </citation>
    <scope>NUCLEOTIDE SEQUENCE [LARGE SCALE GENOMIC DNA]</scope>
    <source>
        <strain>cv. Nipponbare</strain>
    </source>
</reference>
<reference key="5">
    <citation type="journal article" date="2005" name="Nature">
        <title>The map-based sequence of the rice genome.</title>
        <authorList>
            <consortium name="International rice genome sequencing project (IRGSP)"/>
        </authorList>
    </citation>
    <scope>NUCLEOTIDE SEQUENCE [LARGE SCALE GENOMIC DNA]</scope>
    <source>
        <strain>cv. Nipponbare</strain>
    </source>
</reference>
<reference key="6">
    <citation type="journal article" date="2008" name="Nucleic Acids Res.">
        <title>The rice annotation project database (RAP-DB): 2008 update.</title>
        <authorList>
            <consortium name="The rice annotation project (RAP)"/>
        </authorList>
    </citation>
    <scope>GENOME REANNOTATION</scope>
    <source>
        <strain>cv. Nipponbare</strain>
    </source>
</reference>
<reference key="7">
    <citation type="journal article" date="2013" name="Rice">
        <title>Improvement of the Oryza sativa Nipponbare reference genome using next generation sequence and optical map data.</title>
        <authorList>
            <person name="Kawahara Y."/>
            <person name="de la Bastide M."/>
            <person name="Hamilton J.P."/>
            <person name="Kanamori H."/>
            <person name="McCombie W.R."/>
            <person name="Ouyang S."/>
            <person name="Schwartz D.C."/>
            <person name="Tanaka T."/>
            <person name="Wu J."/>
            <person name="Zhou S."/>
            <person name="Childs K.L."/>
            <person name="Davidson R.M."/>
            <person name="Lin H."/>
            <person name="Quesada-Ocampo L."/>
            <person name="Vaillancourt B."/>
            <person name="Sakai H."/>
            <person name="Lee S.S."/>
            <person name="Kim J."/>
            <person name="Numa H."/>
            <person name="Itoh T."/>
            <person name="Buell C.R."/>
            <person name="Matsumoto T."/>
        </authorList>
    </citation>
    <scope>GENOME REANNOTATION</scope>
    <source>
        <strain>cv. Nipponbare</strain>
    </source>
</reference>
<reference key="8">
    <citation type="journal article" date="2005" name="PLoS Biol.">
        <title>The genomes of Oryza sativa: a history of duplications.</title>
        <authorList>
            <person name="Yu J."/>
            <person name="Wang J."/>
            <person name="Lin W."/>
            <person name="Li S."/>
            <person name="Li H."/>
            <person name="Zhou J."/>
            <person name="Ni P."/>
            <person name="Dong W."/>
            <person name="Hu S."/>
            <person name="Zeng C."/>
            <person name="Zhang J."/>
            <person name="Zhang Y."/>
            <person name="Li R."/>
            <person name="Xu Z."/>
            <person name="Li S."/>
            <person name="Li X."/>
            <person name="Zheng H."/>
            <person name="Cong L."/>
            <person name="Lin L."/>
            <person name="Yin J."/>
            <person name="Geng J."/>
            <person name="Li G."/>
            <person name="Shi J."/>
            <person name="Liu J."/>
            <person name="Lv H."/>
            <person name="Li J."/>
            <person name="Wang J."/>
            <person name="Deng Y."/>
            <person name="Ran L."/>
            <person name="Shi X."/>
            <person name="Wang X."/>
            <person name="Wu Q."/>
            <person name="Li C."/>
            <person name="Ren X."/>
            <person name="Wang J."/>
            <person name="Wang X."/>
            <person name="Li D."/>
            <person name="Liu D."/>
            <person name="Zhang X."/>
            <person name="Ji Z."/>
            <person name="Zhao W."/>
            <person name="Sun Y."/>
            <person name="Zhang Z."/>
            <person name="Bao J."/>
            <person name="Han Y."/>
            <person name="Dong L."/>
            <person name="Ji J."/>
            <person name="Chen P."/>
            <person name="Wu S."/>
            <person name="Liu J."/>
            <person name="Xiao Y."/>
            <person name="Bu D."/>
            <person name="Tan J."/>
            <person name="Yang L."/>
            <person name="Ye C."/>
            <person name="Zhang J."/>
            <person name="Xu J."/>
            <person name="Zhou Y."/>
            <person name="Yu Y."/>
            <person name="Zhang B."/>
            <person name="Zhuang S."/>
            <person name="Wei H."/>
            <person name="Liu B."/>
            <person name="Lei M."/>
            <person name="Yu H."/>
            <person name="Li Y."/>
            <person name="Xu H."/>
            <person name="Wei S."/>
            <person name="He X."/>
            <person name="Fang L."/>
            <person name="Zhang Z."/>
            <person name="Zhang Y."/>
            <person name="Huang X."/>
            <person name="Su Z."/>
            <person name="Tong W."/>
            <person name="Li J."/>
            <person name="Tong Z."/>
            <person name="Li S."/>
            <person name="Ye J."/>
            <person name="Wang L."/>
            <person name="Fang L."/>
            <person name="Lei T."/>
            <person name="Chen C.-S."/>
            <person name="Chen H.-C."/>
            <person name="Xu Z."/>
            <person name="Li H."/>
            <person name="Huang H."/>
            <person name="Zhang F."/>
            <person name="Xu H."/>
            <person name="Li N."/>
            <person name="Zhao C."/>
            <person name="Li S."/>
            <person name="Dong L."/>
            <person name="Huang Y."/>
            <person name="Li L."/>
            <person name="Xi Y."/>
            <person name="Qi Q."/>
            <person name="Li W."/>
            <person name="Zhang B."/>
            <person name="Hu W."/>
            <person name="Zhang Y."/>
            <person name="Tian X."/>
            <person name="Jiao Y."/>
            <person name="Liang X."/>
            <person name="Jin J."/>
            <person name="Gao L."/>
            <person name="Zheng W."/>
            <person name="Hao B."/>
            <person name="Liu S.-M."/>
            <person name="Wang W."/>
            <person name="Yuan L."/>
            <person name="Cao M."/>
            <person name="McDermott J."/>
            <person name="Samudrala R."/>
            <person name="Wang J."/>
            <person name="Wong G.K.-S."/>
            <person name="Yang H."/>
        </authorList>
    </citation>
    <scope>NUCLEOTIDE SEQUENCE [LARGE SCALE GENOMIC DNA]</scope>
    <source>
        <strain>cv. Nipponbare</strain>
    </source>
</reference>
<reference key="9">
    <citation type="journal article" date="2003" name="Science">
        <title>Collection, mapping, and annotation of over 28,000 cDNA clones from japonica rice.</title>
        <authorList>
            <consortium name="The rice full-length cDNA consortium"/>
        </authorList>
    </citation>
    <scope>NUCLEOTIDE SEQUENCE [LARGE SCALE MRNA]</scope>
    <source>
        <strain>cv. Nipponbare</strain>
    </source>
</reference>
<feature type="chain" id="PRO_0000086632" description="Serine/threonine-protein kinase SAPK5">
    <location>
        <begin position="1"/>
        <end position="370"/>
    </location>
</feature>
<feature type="domain" description="Protein kinase" evidence="2">
    <location>
        <begin position="4"/>
        <end position="260"/>
    </location>
</feature>
<feature type="region of interest" description="Disordered" evidence="4">
    <location>
        <begin position="312"/>
        <end position="370"/>
    </location>
</feature>
<feature type="compositionally biased region" description="Acidic residues" evidence="4">
    <location>
        <begin position="330"/>
        <end position="349"/>
    </location>
</feature>
<feature type="compositionally biased region" description="Basic and acidic residues" evidence="4">
    <location>
        <begin position="350"/>
        <end position="360"/>
    </location>
</feature>
<feature type="active site" description="Proton acceptor" evidence="2 3">
    <location>
        <position position="123"/>
    </location>
</feature>
<feature type="binding site" evidence="2">
    <location>
        <begin position="10"/>
        <end position="18"/>
    </location>
    <ligand>
        <name>ATP</name>
        <dbReference type="ChEBI" id="CHEBI:30616"/>
    </ligand>
</feature>
<feature type="binding site" evidence="2">
    <location>
        <position position="33"/>
    </location>
    <ligand>
        <name>ATP</name>
        <dbReference type="ChEBI" id="CHEBI:30616"/>
    </ligand>
</feature>
<keyword id="KW-0938">Abscisic acid signaling pathway</keyword>
<keyword id="KW-0067">ATP-binding</keyword>
<keyword id="KW-0963">Cytoplasm</keyword>
<keyword id="KW-0418">Kinase</keyword>
<keyword id="KW-0547">Nucleotide-binding</keyword>
<keyword id="KW-0539">Nucleus</keyword>
<keyword id="KW-0597">Phosphoprotein</keyword>
<keyword id="KW-1185">Reference proteome</keyword>
<keyword id="KW-0723">Serine/threonine-protein kinase</keyword>
<keyword id="KW-0808">Transferase</keyword>
<protein>
    <recommendedName>
        <fullName>Serine/threonine-protein kinase SAPK5</fullName>
        <ecNumber>2.7.11.1</ecNumber>
    </recommendedName>
    <alternativeName>
        <fullName>Osmotic stress/abscisic acid-activated protein kinase 5</fullName>
    </alternativeName>
    <alternativeName>
        <fullName evidence="8">RK3 kinase</fullName>
    </alternativeName>
    <alternativeName>
        <fullName evidence="7">stress-activated protein kinase 5</fullName>
        <shortName evidence="7">OsSAPK5</shortName>
    </alternativeName>
</protein>
<proteinExistence type="evidence at transcript level"/>
<comment type="function">
    <text>May play a role in signal transduction of hyperosmotic response.</text>
</comment>
<comment type="catalytic activity">
    <reaction>
        <text>L-seryl-[protein] + ATP = O-phospho-L-seryl-[protein] + ADP + H(+)</text>
        <dbReference type="Rhea" id="RHEA:17989"/>
        <dbReference type="Rhea" id="RHEA-COMP:9863"/>
        <dbReference type="Rhea" id="RHEA-COMP:11604"/>
        <dbReference type="ChEBI" id="CHEBI:15378"/>
        <dbReference type="ChEBI" id="CHEBI:29999"/>
        <dbReference type="ChEBI" id="CHEBI:30616"/>
        <dbReference type="ChEBI" id="CHEBI:83421"/>
        <dbReference type="ChEBI" id="CHEBI:456216"/>
        <dbReference type="EC" id="2.7.11.1"/>
    </reaction>
</comment>
<comment type="catalytic activity">
    <reaction>
        <text>L-threonyl-[protein] + ATP = O-phospho-L-threonyl-[protein] + ADP + H(+)</text>
        <dbReference type="Rhea" id="RHEA:46608"/>
        <dbReference type="Rhea" id="RHEA-COMP:11060"/>
        <dbReference type="Rhea" id="RHEA-COMP:11605"/>
        <dbReference type="ChEBI" id="CHEBI:15378"/>
        <dbReference type="ChEBI" id="CHEBI:30013"/>
        <dbReference type="ChEBI" id="CHEBI:30616"/>
        <dbReference type="ChEBI" id="CHEBI:61977"/>
        <dbReference type="ChEBI" id="CHEBI:456216"/>
        <dbReference type="EC" id="2.7.11.1"/>
    </reaction>
</comment>
<comment type="activity regulation">
    <text>Activated by hyperosmotic stress.</text>
</comment>
<comment type="subcellular location">
    <subcellularLocation>
        <location evidence="6">Cytoplasm</location>
    </subcellularLocation>
    <subcellularLocation>
        <location evidence="6">Nucleus</location>
    </subcellularLocation>
</comment>
<comment type="tissue specificity">
    <text evidence="5">Expressed in leaf blades, leaf sheaths and roots. Expressed in shoots and roots of young seedlings.</text>
</comment>
<comment type="induction">
    <text evidence="5 6">Weakly induced by hyperosmotic stress and abscisic acid (ABA) in leaf blades (PubMed:15084714). Induced during incompatible interaction with the bacterial pathogen Xanthomonas oryzae pv. oryzicola (Ref.2).</text>
</comment>
<comment type="PTM">
    <text evidence="1">May be phosphorylated.</text>
</comment>
<comment type="similarity">
    <text evidence="2">Belongs to the protein kinase superfamily. Ser/Thr protein kinase family.</text>
</comment>
<organism>
    <name type="scientific">Oryza sativa subsp. japonica</name>
    <name type="common">Rice</name>
    <dbReference type="NCBI Taxonomy" id="39947"/>
    <lineage>
        <taxon>Eukaryota</taxon>
        <taxon>Viridiplantae</taxon>
        <taxon>Streptophyta</taxon>
        <taxon>Embryophyta</taxon>
        <taxon>Tracheophyta</taxon>
        <taxon>Spermatophyta</taxon>
        <taxon>Magnoliopsida</taxon>
        <taxon>Liliopsida</taxon>
        <taxon>Poales</taxon>
        <taxon>Poaceae</taxon>
        <taxon>BOP clade</taxon>
        <taxon>Oryzoideae</taxon>
        <taxon>Oryzeae</taxon>
        <taxon>Oryzinae</taxon>
        <taxon>Oryza</taxon>
        <taxon>Oryza sativa</taxon>
    </lineage>
</organism>
<sequence>MEKYEPVREIGAGNFGVAKLMRNKETRELVAMKFIERGNRIDENVFREIVNHRSLRHPNIIRFKEVVVTGRHLAIVMEYAAGGELFERICEAGRFHEDEARYFFQQLVCGVSYCHAMQICHRDLKLENTLLDGSPAPRLKICDFGYSKSSLLHSRPKSTVGTPAYIAPEVLSRREYDGKLADVWSCGVTLYVMLVGAYPFEDPKDPKNFRKTISRIMSVQYKIPEYVHVSQPCRHLLSRIFVANPYKRISMGEIKSHPWFLKNLPRELKEEAQAVYYNRRGADHAASSASSAAAAAAFSPQSVEDIMRIVQEAQTVPKPDKPVSGYGWGTDDDDDDQQPAEEEDEEDDYDRTVREVHASVDLDMSNLQIS</sequence>
<accession>Q7XKA8</accession>
<accession>Q0J8R7</accession>